<gene>
    <name evidence="5" type="primary">pkgB</name>
    <name type="ORF">ANIA_07070</name>
</gene>
<evidence type="ECO:0000250" key="1">
    <source>
        <dbReference type="UniProtKB" id="Q988B9"/>
    </source>
</evidence>
<evidence type="ECO:0000255" key="2"/>
<evidence type="ECO:0000256" key="3">
    <source>
        <dbReference type="SAM" id="MobiDB-lite"/>
    </source>
</evidence>
<evidence type="ECO:0000269" key="4">
    <source>
    </source>
</evidence>
<evidence type="ECO:0000303" key="5">
    <source>
    </source>
</evidence>
<evidence type="ECO:0000305" key="6"/>
<name>PKGB_EMENI</name>
<sequence>MSGGFYSSPFWAGYLETQRSRLPVLPEIDDGLSHCVVRFLGYNPGSMQLQGTNTYLVGTGSTRILIDTGEGAPQWAVSVTRYLEDHDISISHVLLTHWHKDHTGGVADLLAHDPSIIVYKHAPDPGQQAIANGQTFKTQGATLRAVLTPGHAVDHMCFLLEEENALFTGDNVLGHGYSVAEDLETYTASLRLMAGLKCSVGYPGHGDAILNLPQTIARYISQRVAREKKIYAILALHACSCSSRNGGSTSSIGSVSESGDSDEEDNNMKTSRPAMQGLSTAEIGGLVYGESVKNSPTFDSAVGPLLNQVLYMLLEQGKCCDHVSILVIFQKPGFFSIPVI</sequence>
<proteinExistence type="evidence at protein level"/>
<comment type="function">
    <text evidence="4">Thioesterase; part of the pkg gene cluster that mediates the biosynthesis of dihydrocitreoisocoumarin and 6,8-dihydroxy-3-(2-oxopropyl)-isocoumarin (PubMed:22510154). The non-reducing polyketide synthase pkgA performs the condensation of one acetyl-CoA starter unit with 6 and 5 malonyl-CoA units, respectively (PubMed:22510154). As pkgA lacks a releasing domain, the thioesterase pkgB is necessary to break the thioester bond and release dihydrocitreoisocoumarin and 6,8-dihydroxy-3-(2-oxopropyl)-isocoumarin from pkgA (PubMed:22510154).</text>
</comment>
<comment type="catalytic activity">
    <reaction evidence="4">
        <text>3,5,7,9,11,13-hexaoxotetradecanoyl-[ACP] = dehydrocitreoisocoumarin + holo-[ACP] + H2O</text>
        <dbReference type="Rhea" id="RHEA:64492"/>
        <dbReference type="Rhea" id="RHEA-COMP:9685"/>
        <dbReference type="Rhea" id="RHEA-COMP:15846"/>
        <dbReference type="ChEBI" id="CHEBI:15377"/>
        <dbReference type="ChEBI" id="CHEBI:64479"/>
        <dbReference type="ChEBI" id="CHEBI:142800"/>
        <dbReference type="ChEBI" id="CHEBI:155857"/>
    </reaction>
    <physiologicalReaction direction="left-to-right" evidence="4">
        <dbReference type="Rhea" id="RHEA:64493"/>
    </physiologicalReaction>
</comment>
<comment type="catalytic activity">
    <reaction evidence="4">
        <text>3,5,7,9,11-pentaoxododecanoyl-[ACP] = 6,8-dihydroxy-3-(2-oxopropyl)-isocoumarin + holo-[ACP] + H2O</text>
        <dbReference type="Rhea" id="RHEA:64496"/>
        <dbReference type="Rhea" id="RHEA-COMP:9685"/>
        <dbReference type="Rhea" id="RHEA-COMP:16607"/>
        <dbReference type="ChEBI" id="CHEBI:15377"/>
        <dbReference type="ChEBI" id="CHEBI:64479"/>
        <dbReference type="ChEBI" id="CHEBI:155858"/>
        <dbReference type="ChEBI" id="CHEBI:155859"/>
    </reaction>
    <physiologicalReaction direction="left-to-right" evidence="4">
        <dbReference type="Rhea" id="RHEA:64497"/>
    </physiologicalReaction>
</comment>
<comment type="cofactor">
    <cofactor evidence="1">
        <name>Zn(2+)</name>
        <dbReference type="ChEBI" id="CHEBI:29105"/>
    </cofactor>
    <text evidence="1">Binds 2 Zn(2+) ions per subunit.</text>
</comment>
<comment type="similarity">
    <text evidence="6">Belongs to the metallo-beta-lactamase superfamily.</text>
</comment>
<dbReference type="EC" id="3.1.2.-" evidence="4"/>
<dbReference type="EMBL" id="BN001304">
    <property type="protein sequence ID" value="CBF79145.1"/>
    <property type="molecule type" value="Genomic_DNA"/>
</dbReference>
<dbReference type="RefSeq" id="XP_664674.1">
    <property type="nucleotide sequence ID" value="XM_659582.1"/>
</dbReference>
<dbReference type="SMR" id="Q5AXB0"/>
<dbReference type="STRING" id="227321.Q5AXB0"/>
<dbReference type="EnsemblFungi" id="CBF79145">
    <property type="protein sequence ID" value="CBF79145"/>
    <property type="gene ID" value="ANIA_07070"/>
</dbReference>
<dbReference type="GeneID" id="2869946"/>
<dbReference type="KEGG" id="ani:ANIA_07070"/>
<dbReference type="VEuPathDB" id="FungiDB:AN7070"/>
<dbReference type="eggNOG" id="KOG0813">
    <property type="taxonomic scope" value="Eukaryota"/>
</dbReference>
<dbReference type="HOGENOM" id="CLU_048478_1_0_1"/>
<dbReference type="InParanoid" id="Q5AXB0"/>
<dbReference type="OMA" id="VDHMCFV"/>
<dbReference type="OrthoDB" id="17458at2759"/>
<dbReference type="Proteomes" id="UP000000560">
    <property type="component" value="Chromosome IV"/>
</dbReference>
<dbReference type="GO" id="GO:0016787">
    <property type="term" value="F:hydrolase activity"/>
    <property type="evidence" value="ECO:0007669"/>
    <property type="project" value="UniProtKB-KW"/>
</dbReference>
<dbReference type="GO" id="GO:0046872">
    <property type="term" value="F:metal ion binding"/>
    <property type="evidence" value="ECO:0007669"/>
    <property type="project" value="UniProtKB-KW"/>
</dbReference>
<dbReference type="GO" id="GO:0044550">
    <property type="term" value="P:secondary metabolite biosynthetic process"/>
    <property type="evidence" value="ECO:0000315"/>
    <property type="project" value="AspGD"/>
</dbReference>
<dbReference type="CDD" id="cd07722">
    <property type="entry name" value="LACTB2-like_MBL-fold"/>
    <property type="match status" value="1"/>
</dbReference>
<dbReference type="FunFam" id="3.60.15.10:FF:000041">
    <property type="entry name" value="Metallo-beta-lactamase domain protein"/>
    <property type="match status" value="1"/>
</dbReference>
<dbReference type="Gene3D" id="3.60.15.10">
    <property type="entry name" value="Ribonuclease Z/Hydroxyacylglutathione hydrolase-like"/>
    <property type="match status" value="1"/>
</dbReference>
<dbReference type="InterPro" id="IPR047921">
    <property type="entry name" value="LACTB2-like_MBL-fold"/>
</dbReference>
<dbReference type="InterPro" id="IPR001279">
    <property type="entry name" value="Metallo-B-lactamas"/>
</dbReference>
<dbReference type="InterPro" id="IPR036866">
    <property type="entry name" value="RibonucZ/Hydroxyglut_hydro"/>
</dbReference>
<dbReference type="InterPro" id="IPR050662">
    <property type="entry name" value="Sec-metab_biosynth-thioest"/>
</dbReference>
<dbReference type="PANTHER" id="PTHR23131">
    <property type="entry name" value="ENDORIBONUCLEASE LACTB2"/>
    <property type="match status" value="1"/>
</dbReference>
<dbReference type="PANTHER" id="PTHR23131:SF2">
    <property type="entry name" value="LACTAMASE-LIKE PROTEIN APTB-RELATED"/>
    <property type="match status" value="1"/>
</dbReference>
<dbReference type="Pfam" id="PF00753">
    <property type="entry name" value="Lactamase_B"/>
    <property type="match status" value="1"/>
</dbReference>
<dbReference type="SMART" id="SM00849">
    <property type="entry name" value="Lactamase_B"/>
    <property type="match status" value="1"/>
</dbReference>
<dbReference type="SUPFAM" id="SSF56281">
    <property type="entry name" value="Metallo-hydrolase/oxidoreductase"/>
    <property type="match status" value="1"/>
</dbReference>
<protein>
    <recommendedName>
        <fullName evidence="5">Thioesterase pkgB</fullName>
        <ecNumber evidence="4">3.1.2.-</ecNumber>
    </recommendedName>
    <alternativeName>
        <fullName evidence="5">Pkg biosynthesis cluster protein B</fullName>
    </alternativeName>
</protein>
<organism>
    <name type="scientific">Emericella nidulans (strain FGSC A4 / ATCC 38163 / CBS 112.46 / NRRL 194 / M139)</name>
    <name type="common">Aspergillus nidulans</name>
    <dbReference type="NCBI Taxonomy" id="227321"/>
    <lineage>
        <taxon>Eukaryota</taxon>
        <taxon>Fungi</taxon>
        <taxon>Dikarya</taxon>
        <taxon>Ascomycota</taxon>
        <taxon>Pezizomycotina</taxon>
        <taxon>Eurotiomycetes</taxon>
        <taxon>Eurotiomycetidae</taxon>
        <taxon>Eurotiales</taxon>
        <taxon>Aspergillaceae</taxon>
        <taxon>Aspergillus</taxon>
        <taxon>Aspergillus subgen. Nidulantes</taxon>
    </lineage>
</organism>
<accession>Q5AXB0</accession>
<accession>C8VB31</accession>
<feature type="chain" id="PRO_0000450872" description="Thioesterase pkgB">
    <location>
        <begin position="1"/>
        <end position="340"/>
    </location>
</feature>
<feature type="region of interest" description="Disordered" evidence="3">
    <location>
        <begin position="242"/>
        <end position="271"/>
    </location>
</feature>
<feature type="compositionally biased region" description="Low complexity" evidence="3">
    <location>
        <begin position="242"/>
        <end position="258"/>
    </location>
</feature>
<feature type="active site" description="Proton donor/acceptor" evidence="2">
    <location>
        <position position="101"/>
    </location>
</feature>
<feature type="binding site" evidence="1">
    <location>
        <position position="97"/>
    </location>
    <ligand>
        <name>Zn(2+)</name>
        <dbReference type="ChEBI" id="CHEBI:29105"/>
        <label>1</label>
        <note>catalytic</note>
    </ligand>
</feature>
<feature type="binding site" evidence="1">
    <location>
        <position position="99"/>
    </location>
    <ligand>
        <name>Zn(2+)</name>
        <dbReference type="ChEBI" id="CHEBI:29105"/>
        <label>1</label>
        <note>catalytic</note>
    </ligand>
</feature>
<feature type="binding site" evidence="1">
    <location>
        <position position="101"/>
    </location>
    <ligand>
        <name>Zn(2+)</name>
        <dbReference type="ChEBI" id="CHEBI:29105"/>
        <label>2</label>
        <note>catalytic</note>
    </ligand>
</feature>
<feature type="binding site" evidence="1">
    <location>
        <position position="102"/>
    </location>
    <ligand>
        <name>Zn(2+)</name>
        <dbReference type="ChEBI" id="CHEBI:29105"/>
        <label>2</label>
        <note>catalytic</note>
    </ligand>
</feature>
<feature type="binding site" evidence="1">
    <location>
        <position position="205"/>
    </location>
    <ligand>
        <name>Zn(2+)</name>
        <dbReference type="ChEBI" id="CHEBI:29105"/>
        <label>1</label>
        <note>catalytic</note>
    </ligand>
</feature>
<keyword id="KW-0378">Hydrolase</keyword>
<keyword id="KW-0479">Metal-binding</keyword>
<keyword id="KW-1185">Reference proteome</keyword>
<keyword id="KW-0862">Zinc</keyword>
<reference key="1">
    <citation type="journal article" date="2005" name="Nature">
        <title>Sequencing of Aspergillus nidulans and comparative analysis with A. fumigatus and A. oryzae.</title>
        <authorList>
            <person name="Galagan J.E."/>
            <person name="Calvo S.E."/>
            <person name="Cuomo C."/>
            <person name="Ma L.-J."/>
            <person name="Wortman J.R."/>
            <person name="Batzoglou S."/>
            <person name="Lee S.-I."/>
            <person name="Bastuerkmen M."/>
            <person name="Spevak C.C."/>
            <person name="Clutterbuck J."/>
            <person name="Kapitonov V."/>
            <person name="Jurka J."/>
            <person name="Scazzocchio C."/>
            <person name="Farman M.L."/>
            <person name="Butler J."/>
            <person name="Purcell S."/>
            <person name="Harris S."/>
            <person name="Braus G.H."/>
            <person name="Draht O."/>
            <person name="Busch S."/>
            <person name="D'Enfert C."/>
            <person name="Bouchier C."/>
            <person name="Goldman G.H."/>
            <person name="Bell-Pedersen D."/>
            <person name="Griffiths-Jones S."/>
            <person name="Doonan J.H."/>
            <person name="Yu J."/>
            <person name="Vienken K."/>
            <person name="Pain A."/>
            <person name="Freitag M."/>
            <person name="Selker E.U."/>
            <person name="Archer D.B."/>
            <person name="Penalva M.A."/>
            <person name="Oakley B.R."/>
            <person name="Momany M."/>
            <person name="Tanaka T."/>
            <person name="Kumagai T."/>
            <person name="Asai K."/>
            <person name="Machida M."/>
            <person name="Nierman W.C."/>
            <person name="Denning D.W."/>
            <person name="Caddick M.X."/>
            <person name="Hynes M."/>
            <person name="Paoletti M."/>
            <person name="Fischer R."/>
            <person name="Miller B.L."/>
            <person name="Dyer P.S."/>
            <person name="Sachs M.S."/>
            <person name="Osmani S.A."/>
            <person name="Birren B.W."/>
        </authorList>
    </citation>
    <scope>NUCLEOTIDE SEQUENCE [LARGE SCALE GENOMIC DNA]</scope>
    <source>
        <strain>FGSC A4 / ATCC 38163 / CBS 112.46 / NRRL 194 / M139</strain>
    </source>
</reference>
<reference key="2">
    <citation type="journal article" date="2009" name="Fungal Genet. Biol.">
        <title>The 2008 update of the Aspergillus nidulans genome annotation: a community effort.</title>
        <authorList>
            <person name="Wortman J.R."/>
            <person name="Gilsenan J.M."/>
            <person name="Joardar V."/>
            <person name="Deegan J."/>
            <person name="Clutterbuck J."/>
            <person name="Andersen M.R."/>
            <person name="Archer D."/>
            <person name="Bencina M."/>
            <person name="Braus G."/>
            <person name="Coutinho P."/>
            <person name="von Dohren H."/>
            <person name="Doonan J."/>
            <person name="Driessen A.J."/>
            <person name="Durek P."/>
            <person name="Espeso E."/>
            <person name="Fekete E."/>
            <person name="Flipphi M."/>
            <person name="Estrada C.G."/>
            <person name="Geysens S."/>
            <person name="Goldman G."/>
            <person name="de Groot P.W."/>
            <person name="Hansen K."/>
            <person name="Harris S.D."/>
            <person name="Heinekamp T."/>
            <person name="Helmstaedt K."/>
            <person name="Henrissat B."/>
            <person name="Hofmann G."/>
            <person name="Homan T."/>
            <person name="Horio T."/>
            <person name="Horiuchi H."/>
            <person name="James S."/>
            <person name="Jones M."/>
            <person name="Karaffa L."/>
            <person name="Karanyi Z."/>
            <person name="Kato M."/>
            <person name="Keller N."/>
            <person name="Kelly D.E."/>
            <person name="Kiel J.A."/>
            <person name="Kim J.M."/>
            <person name="van der Klei I.J."/>
            <person name="Klis F.M."/>
            <person name="Kovalchuk A."/>
            <person name="Krasevec N."/>
            <person name="Kubicek C.P."/>
            <person name="Liu B."/>
            <person name="Maccabe A."/>
            <person name="Meyer V."/>
            <person name="Mirabito P."/>
            <person name="Miskei M."/>
            <person name="Mos M."/>
            <person name="Mullins J."/>
            <person name="Nelson D.R."/>
            <person name="Nielsen J."/>
            <person name="Oakley B.R."/>
            <person name="Osmani S.A."/>
            <person name="Pakula T."/>
            <person name="Paszewski A."/>
            <person name="Paulsen I."/>
            <person name="Pilsyk S."/>
            <person name="Pocsi I."/>
            <person name="Punt P.J."/>
            <person name="Ram A.F."/>
            <person name="Ren Q."/>
            <person name="Robellet X."/>
            <person name="Robson G."/>
            <person name="Seiboth B."/>
            <person name="van Solingen P."/>
            <person name="Specht T."/>
            <person name="Sun J."/>
            <person name="Taheri-Talesh N."/>
            <person name="Takeshita N."/>
            <person name="Ussery D."/>
            <person name="vanKuyk P.A."/>
            <person name="Visser H."/>
            <person name="van de Vondervoort P.J."/>
            <person name="de Vries R.P."/>
            <person name="Walton J."/>
            <person name="Xiang X."/>
            <person name="Xiong Y."/>
            <person name="Zeng A.P."/>
            <person name="Brandt B.W."/>
            <person name="Cornell M.J."/>
            <person name="van den Hondel C.A."/>
            <person name="Visser J."/>
            <person name="Oliver S.G."/>
            <person name="Turner G."/>
        </authorList>
    </citation>
    <scope>GENOME REANNOTATION</scope>
    <source>
        <strain>FGSC A4 / ATCC 38163 / CBS 112.46 / NRRL 194 / M139</strain>
    </source>
</reference>
<reference key="3">
    <citation type="journal article" date="2012" name="J. Am. Chem. Soc.">
        <title>Illuminating the diversity of aromatic polyketide synthases in Aspergillus nidulans.</title>
        <authorList>
            <person name="Ahuja M."/>
            <person name="Chiang Y.M."/>
            <person name="Chang S.L."/>
            <person name="Praseuth M.B."/>
            <person name="Entwistle R."/>
            <person name="Sanchez J.F."/>
            <person name="Lo H.C."/>
            <person name="Yeh H.H."/>
            <person name="Oakley B.R."/>
            <person name="Wang C.C."/>
        </authorList>
    </citation>
    <scope>FUNCTION</scope>
    <scope>CATALYTIC ACTIVITY</scope>
    <scope>PATHWAY</scope>
</reference>